<name>MDTB_SALNS</name>
<dbReference type="EMBL" id="CP001113">
    <property type="protein sequence ID" value="ACF62476.1"/>
    <property type="molecule type" value="Genomic_DNA"/>
</dbReference>
<dbReference type="RefSeq" id="WP_001197787.1">
    <property type="nucleotide sequence ID" value="NZ_CCMR01000002.1"/>
</dbReference>
<dbReference type="SMR" id="B4SXW0"/>
<dbReference type="KEGG" id="see:SNSL254_A2313"/>
<dbReference type="HOGENOM" id="CLU_002755_1_1_6"/>
<dbReference type="Proteomes" id="UP000008824">
    <property type="component" value="Chromosome"/>
</dbReference>
<dbReference type="GO" id="GO:0005886">
    <property type="term" value="C:plasma membrane"/>
    <property type="evidence" value="ECO:0007669"/>
    <property type="project" value="UniProtKB-SubCell"/>
</dbReference>
<dbReference type="GO" id="GO:0042910">
    <property type="term" value="F:xenobiotic transmembrane transporter activity"/>
    <property type="evidence" value="ECO:0007669"/>
    <property type="project" value="TreeGrafter"/>
</dbReference>
<dbReference type="FunFam" id="1.20.1640.10:FF:000001">
    <property type="entry name" value="Efflux pump membrane transporter"/>
    <property type="match status" value="1"/>
</dbReference>
<dbReference type="FunFam" id="3.30.70.1430:FF:000001">
    <property type="entry name" value="Efflux pump membrane transporter"/>
    <property type="match status" value="1"/>
</dbReference>
<dbReference type="FunFam" id="3.30.2090.10:FF:000003">
    <property type="entry name" value="Multidrug resistance protein MdtB"/>
    <property type="match status" value="1"/>
</dbReference>
<dbReference type="Gene3D" id="3.30.70.1430">
    <property type="entry name" value="Multidrug efflux transporter AcrB pore domain"/>
    <property type="match status" value="2"/>
</dbReference>
<dbReference type="Gene3D" id="3.30.70.1440">
    <property type="entry name" value="Multidrug efflux transporter AcrB pore domain"/>
    <property type="match status" value="1"/>
</dbReference>
<dbReference type="Gene3D" id="3.30.70.1320">
    <property type="entry name" value="Multidrug efflux transporter AcrB pore domain like"/>
    <property type="match status" value="1"/>
</dbReference>
<dbReference type="Gene3D" id="3.30.2090.10">
    <property type="entry name" value="Multidrug efflux transporter AcrB TolC docking domain, DN and DC subdomains"/>
    <property type="match status" value="2"/>
</dbReference>
<dbReference type="Gene3D" id="1.20.1640.10">
    <property type="entry name" value="Multidrug efflux transporter AcrB transmembrane domain"/>
    <property type="match status" value="2"/>
</dbReference>
<dbReference type="HAMAP" id="MF_01423">
    <property type="entry name" value="MdtB"/>
    <property type="match status" value="1"/>
</dbReference>
<dbReference type="InterPro" id="IPR027463">
    <property type="entry name" value="AcrB_DN_DC_subdom"/>
</dbReference>
<dbReference type="InterPro" id="IPR001036">
    <property type="entry name" value="Acrflvin-R"/>
</dbReference>
<dbReference type="InterPro" id="IPR022831">
    <property type="entry name" value="Multidrug-R_MdtB"/>
</dbReference>
<dbReference type="NCBIfam" id="NF007798">
    <property type="entry name" value="PRK10503.1"/>
    <property type="match status" value="1"/>
</dbReference>
<dbReference type="NCBIfam" id="NF033617">
    <property type="entry name" value="RND_permease_2"/>
    <property type="match status" value="1"/>
</dbReference>
<dbReference type="PANTHER" id="PTHR32063">
    <property type="match status" value="1"/>
</dbReference>
<dbReference type="PANTHER" id="PTHR32063:SF21">
    <property type="entry name" value="MULTIDRUG RESISTANCE PROTEIN MDTB"/>
    <property type="match status" value="1"/>
</dbReference>
<dbReference type="Pfam" id="PF00873">
    <property type="entry name" value="ACR_tran"/>
    <property type="match status" value="1"/>
</dbReference>
<dbReference type="PRINTS" id="PR00702">
    <property type="entry name" value="ACRIFLAVINRP"/>
</dbReference>
<dbReference type="SUPFAM" id="SSF82693">
    <property type="entry name" value="Multidrug efflux transporter AcrB pore domain, PN1, PN2, PC1 and PC2 subdomains"/>
    <property type="match status" value="3"/>
</dbReference>
<dbReference type="SUPFAM" id="SSF82714">
    <property type="entry name" value="Multidrug efflux transporter AcrB TolC docking domain, DN and DC subdomains"/>
    <property type="match status" value="2"/>
</dbReference>
<dbReference type="SUPFAM" id="SSF82866">
    <property type="entry name" value="Multidrug efflux transporter AcrB transmembrane domain"/>
    <property type="match status" value="2"/>
</dbReference>
<reference key="1">
    <citation type="journal article" date="2011" name="J. Bacteriol.">
        <title>Comparative genomics of 28 Salmonella enterica isolates: evidence for CRISPR-mediated adaptive sublineage evolution.</title>
        <authorList>
            <person name="Fricke W.F."/>
            <person name="Mammel M.K."/>
            <person name="McDermott P.F."/>
            <person name="Tartera C."/>
            <person name="White D.G."/>
            <person name="Leclerc J.E."/>
            <person name="Ravel J."/>
            <person name="Cebula T.A."/>
        </authorList>
    </citation>
    <scope>NUCLEOTIDE SEQUENCE [LARGE SCALE GENOMIC DNA]</scope>
    <source>
        <strain>SL254</strain>
    </source>
</reference>
<proteinExistence type="inferred from homology"/>
<sequence length="1040" mass="111823">MQVLPPGSTGGPSRLFILRPVATTLLMAAILLAGIIGYRFLPVAALPEVDYPTIQVVTLYPGASPDVMTSAVTAPLERQFGQMSGLKQMSSQSSGGASVVTLQFQLTLPLDVAEQEVQAAINAATNLLPSDLPNPPIYSKVNPADPPIMTLAVTSNAMPMTQVEDMVETRVAQKISQVSGVGLVTLAGGQRPAVRVKLNAQAVAALGLTSETIRTAITGANVNSAKGSLDGPERAVTLSANDQMQSADEYRKLIIAYQNGAPVRLGDVATVEQGAENSWLGAWANQAPAIVMNVQRQPGANIIATADSIRQMLPQLTESLPKSVKVTVLSDRTTNIRASVRDTQFELMLAIALVVMIIYLFLRNIPATIIPGVAVPLSLIGTFAVMVFLDFSINNLTLMALTIATGFVVDDAIVVIENISRYIEKGEKPLAAALKGAGEIGFTIISLTFSLIAVLIPLLFMGDIVGRLFREFAVTLAVAILISAVVSLTLTPMMCARMLSQQSLRKQNRFSRACERMFDRVIASYGRGLAKVLNHPWLTLSVAFATLLLSIMLWIVIPKGFFPVQDNGIIQGTLQAPQSSSYASMAQRQRQVAERILQDPAVQSLTTFVGVDGANPTLNSARLQINLKPLDARDDRVQQVISRLQTAVATIPGVALYLQPTQDLTIDTQVSRTQYQFTLQATTLDALSHWVPKLQNALQSLPQLSEVSSDWQDRGLAAWVNVDRDSASRLGISMADVDNALYNAFGQRLISTIYTQANQYRVVLEHNTASTPGLAALETIRLTSRDGGTVPLSAIARIEQRFAPLSINHLDQFPVTTFSFNVPEGYSLGDAVQAILDTEKTLALPADITTQFQGSTLAFQAALGSTVWLIVAAVVAMYIVLGVLYESFIHPITILSTLPTAGVGALLALIIAGSELDIIAIIGIILLIGIVKKNAIMMIDFALAAEREQGMSPRDAIFQACLLRFRPILMTTLAALLGALPLMLSTGVGAELRRPLGIAMVGGLLVSQVLTLFTTPVIYLLFDRLSLYVKSRFPRHKEEA</sequence>
<protein>
    <recommendedName>
        <fullName evidence="1">Multidrug resistance protein MdtB</fullName>
    </recommendedName>
    <alternativeName>
        <fullName evidence="1">Multidrug transporter MdtB</fullName>
    </alternativeName>
</protein>
<gene>
    <name evidence="1" type="primary">mdtB</name>
    <name type="ordered locus">SNSL254_A2313</name>
</gene>
<feature type="chain" id="PRO_1000145662" description="Multidrug resistance protein MdtB">
    <location>
        <begin position="1"/>
        <end position="1040"/>
    </location>
</feature>
<feature type="transmembrane region" description="Helical" evidence="1">
    <location>
        <begin position="25"/>
        <end position="45"/>
    </location>
</feature>
<feature type="transmembrane region" description="Helical" evidence="1">
    <location>
        <begin position="347"/>
        <end position="367"/>
    </location>
</feature>
<feature type="transmembrane region" description="Helical" evidence="1">
    <location>
        <begin position="369"/>
        <end position="389"/>
    </location>
</feature>
<feature type="transmembrane region" description="Helical" evidence="1">
    <location>
        <begin position="396"/>
        <end position="416"/>
    </location>
</feature>
<feature type="transmembrane region" description="Helical" evidence="1">
    <location>
        <begin position="440"/>
        <end position="460"/>
    </location>
</feature>
<feature type="transmembrane region" description="Helical" evidence="1">
    <location>
        <begin position="472"/>
        <end position="492"/>
    </location>
</feature>
<feature type="transmembrane region" description="Helical" evidence="1">
    <location>
        <begin position="537"/>
        <end position="557"/>
    </location>
</feature>
<feature type="transmembrane region" description="Helical" evidence="1">
    <location>
        <begin position="863"/>
        <end position="883"/>
    </location>
</feature>
<feature type="transmembrane region" description="Helical" evidence="1">
    <location>
        <begin position="888"/>
        <end position="908"/>
    </location>
</feature>
<feature type="transmembrane region" description="Helical" evidence="1">
    <location>
        <begin position="910"/>
        <end position="930"/>
    </location>
</feature>
<feature type="transmembrane region" description="Helical" evidence="1">
    <location>
        <begin position="968"/>
        <end position="988"/>
    </location>
</feature>
<feature type="transmembrane region" description="Helical" evidence="1">
    <location>
        <begin position="998"/>
        <end position="1018"/>
    </location>
</feature>
<keyword id="KW-0997">Cell inner membrane</keyword>
<keyword id="KW-1003">Cell membrane</keyword>
<keyword id="KW-0472">Membrane</keyword>
<keyword id="KW-0812">Transmembrane</keyword>
<keyword id="KW-1133">Transmembrane helix</keyword>
<keyword id="KW-0813">Transport</keyword>
<accession>B4SXW0</accession>
<organism>
    <name type="scientific">Salmonella newport (strain SL254)</name>
    <dbReference type="NCBI Taxonomy" id="423368"/>
    <lineage>
        <taxon>Bacteria</taxon>
        <taxon>Pseudomonadati</taxon>
        <taxon>Pseudomonadota</taxon>
        <taxon>Gammaproteobacteria</taxon>
        <taxon>Enterobacterales</taxon>
        <taxon>Enterobacteriaceae</taxon>
        <taxon>Salmonella</taxon>
    </lineage>
</organism>
<evidence type="ECO:0000255" key="1">
    <source>
        <dbReference type="HAMAP-Rule" id="MF_01423"/>
    </source>
</evidence>
<comment type="subunit">
    <text evidence="1">Part of a tripartite efflux system composed of MdtA, MdtB and MdtC. MdtB forms a heteromultimer with MdtC.</text>
</comment>
<comment type="subcellular location">
    <subcellularLocation>
        <location evidence="1">Cell inner membrane</location>
        <topology evidence="1">Multi-pass membrane protein</topology>
    </subcellularLocation>
</comment>
<comment type="similarity">
    <text evidence="1">Belongs to the resistance-nodulation-cell division (RND) (TC 2.A.6) family. MdtB subfamily.</text>
</comment>